<protein>
    <recommendedName>
        <fullName evidence="1">Ribosome maturation factor RimP</fullName>
    </recommendedName>
</protein>
<reference key="1">
    <citation type="submission" date="2007-03" db="EMBL/GenBank/DDBJ databases">
        <title>Complete sequence of chromosome 1 of Burkholderia vietnamiensis G4.</title>
        <authorList>
            <consortium name="US DOE Joint Genome Institute"/>
            <person name="Copeland A."/>
            <person name="Lucas S."/>
            <person name="Lapidus A."/>
            <person name="Barry K."/>
            <person name="Detter J.C."/>
            <person name="Glavina del Rio T."/>
            <person name="Hammon N."/>
            <person name="Israni S."/>
            <person name="Dalin E."/>
            <person name="Tice H."/>
            <person name="Pitluck S."/>
            <person name="Chain P."/>
            <person name="Malfatti S."/>
            <person name="Shin M."/>
            <person name="Vergez L."/>
            <person name="Schmutz J."/>
            <person name="Larimer F."/>
            <person name="Land M."/>
            <person name="Hauser L."/>
            <person name="Kyrpides N."/>
            <person name="Tiedje J."/>
            <person name="Richardson P."/>
        </authorList>
    </citation>
    <scope>NUCLEOTIDE SEQUENCE [LARGE SCALE GENOMIC DNA]</scope>
    <source>
        <strain>G4 / LMG 22486</strain>
    </source>
</reference>
<comment type="function">
    <text evidence="1">Required for maturation of 30S ribosomal subunits.</text>
</comment>
<comment type="subcellular location">
    <subcellularLocation>
        <location evidence="1">Cytoplasm</location>
    </subcellularLocation>
</comment>
<comment type="similarity">
    <text evidence="1">Belongs to the RimP family.</text>
</comment>
<name>RIMP_BURVG</name>
<gene>
    <name evidence="1" type="primary">rimP</name>
    <name type="ordered locus">Bcep1808_1464</name>
</gene>
<feature type="chain" id="PRO_1000064697" description="Ribosome maturation factor RimP">
    <location>
        <begin position="1"/>
        <end position="152"/>
    </location>
</feature>
<sequence>MQLTELIETTVTGLGYELVDLERTGRGMLCIYIDQPAGISLDDCEKVTRQLQHVLTVENIDYERLEVSSPGLDRPLKKLADFERFAGSEVSVTLKKPLDGRKTYRGILHAPNGETIGLEFERNKGEAAMLDFTLADIDKARLIPQVDFRSRK</sequence>
<dbReference type="EMBL" id="CP000614">
    <property type="protein sequence ID" value="ABO54472.1"/>
    <property type="molecule type" value="Genomic_DNA"/>
</dbReference>
<dbReference type="SMR" id="A4JDW9"/>
<dbReference type="KEGG" id="bvi:Bcep1808_1464"/>
<dbReference type="eggNOG" id="COG0779">
    <property type="taxonomic scope" value="Bacteria"/>
</dbReference>
<dbReference type="HOGENOM" id="CLU_070525_1_0_4"/>
<dbReference type="Proteomes" id="UP000002287">
    <property type="component" value="Chromosome 1"/>
</dbReference>
<dbReference type="GO" id="GO:0005829">
    <property type="term" value="C:cytosol"/>
    <property type="evidence" value="ECO:0007669"/>
    <property type="project" value="TreeGrafter"/>
</dbReference>
<dbReference type="GO" id="GO:0000028">
    <property type="term" value="P:ribosomal small subunit assembly"/>
    <property type="evidence" value="ECO:0007669"/>
    <property type="project" value="TreeGrafter"/>
</dbReference>
<dbReference type="GO" id="GO:0006412">
    <property type="term" value="P:translation"/>
    <property type="evidence" value="ECO:0007669"/>
    <property type="project" value="TreeGrafter"/>
</dbReference>
<dbReference type="CDD" id="cd01734">
    <property type="entry name" value="YlxS_C"/>
    <property type="match status" value="1"/>
</dbReference>
<dbReference type="Gene3D" id="2.30.30.180">
    <property type="entry name" value="Ribosome maturation factor RimP, C-terminal domain"/>
    <property type="match status" value="1"/>
</dbReference>
<dbReference type="Gene3D" id="3.30.300.70">
    <property type="entry name" value="RimP-like superfamily, N-terminal"/>
    <property type="match status" value="1"/>
</dbReference>
<dbReference type="HAMAP" id="MF_01077">
    <property type="entry name" value="RimP"/>
    <property type="match status" value="1"/>
</dbReference>
<dbReference type="InterPro" id="IPR003728">
    <property type="entry name" value="Ribosome_maturation_RimP"/>
</dbReference>
<dbReference type="InterPro" id="IPR028998">
    <property type="entry name" value="RimP_C"/>
</dbReference>
<dbReference type="InterPro" id="IPR036847">
    <property type="entry name" value="RimP_C_sf"/>
</dbReference>
<dbReference type="InterPro" id="IPR028989">
    <property type="entry name" value="RimP_N"/>
</dbReference>
<dbReference type="InterPro" id="IPR035956">
    <property type="entry name" value="RimP_N_sf"/>
</dbReference>
<dbReference type="NCBIfam" id="NF000929">
    <property type="entry name" value="PRK00092.2-1"/>
    <property type="match status" value="1"/>
</dbReference>
<dbReference type="PANTHER" id="PTHR33867">
    <property type="entry name" value="RIBOSOME MATURATION FACTOR RIMP"/>
    <property type="match status" value="1"/>
</dbReference>
<dbReference type="PANTHER" id="PTHR33867:SF1">
    <property type="entry name" value="RIBOSOME MATURATION FACTOR RIMP"/>
    <property type="match status" value="1"/>
</dbReference>
<dbReference type="Pfam" id="PF17384">
    <property type="entry name" value="DUF150_C"/>
    <property type="match status" value="1"/>
</dbReference>
<dbReference type="Pfam" id="PF02576">
    <property type="entry name" value="RimP_N"/>
    <property type="match status" value="1"/>
</dbReference>
<dbReference type="SUPFAM" id="SSF74942">
    <property type="entry name" value="YhbC-like, C-terminal domain"/>
    <property type="match status" value="1"/>
</dbReference>
<dbReference type="SUPFAM" id="SSF75420">
    <property type="entry name" value="YhbC-like, N-terminal domain"/>
    <property type="match status" value="1"/>
</dbReference>
<evidence type="ECO:0000255" key="1">
    <source>
        <dbReference type="HAMAP-Rule" id="MF_01077"/>
    </source>
</evidence>
<accession>A4JDW9</accession>
<proteinExistence type="inferred from homology"/>
<organism>
    <name type="scientific">Burkholderia vietnamiensis (strain G4 / LMG 22486)</name>
    <name type="common">Burkholderia cepacia (strain R1808)</name>
    <dbReference type="NCBI Taxonomy" id="269482"/>
    <lineage>
        <taxon>Bacteria</taxon>
        <taxon>Pseudomonadati</taxon>
        <taxon>Pseudomonadota</taxon>
        <taxon>Betaproteobacteria</taxon>
        <taxon>Burkholderiales</taxon>
        <taxon>Burkholderiaceae</taxon>
        <taxon>Burkholderia</taxon>
        <taxon>Burkholderia cepacia complex</taxon>
    </lineage>
</organism>
<keyword id="KW-0963">Cytoplasm</keyword>
<keyword id="KW-0690">Ribosome biogenesis</keyword>